<comment type="function">
    <text evidence="1">One of the primary rRNA binding proteins, this protein initially binds near the 5'-end of the 23S rRNA. It is important during the early stages of 50S assembly. It makes multiple contacts with different domains of the 23S rRNA in the assembled 50S subunit and ribosome.</text>
</comment>
<comment type="function">
    <text evidence="1">Forms part of the polypeptide exit tunnel.</text>
</comment>
<comment type="subunit">
    <text evidence="1">Part of the 50S ribosomal subunit.</text>
</comment>
<comment type="similarity">
    <text evidence="1">Belongs to the universal ribosomal protein uL4 family.</text>
</comment>
<keyword id="KW-1185">Reference proteome</keyword>
<keyword id="KW-0687">Ribonucleoprotein</keyword>
<keyword id="KW-0689">Ribosomal protein</keyword>
<keyword id="KW-0694">RNA-binding</keyword>
<keyword id="KW-0699">rRNA-binding</keyword>
<feature type="chain" id="PRO_1000052383" description="Large ribosomal subunit protein uL4">
    <location>
        <begin position="1"/>
        <end position="206"/>
    </location>
</feature>
<feature type="region of interest" description="Disordered" evidence="2">
    <location>
        <begin position="47"/>
        <end position="75"/>
    </location>
</feature>
<proteinExistence type="inferred from homology"/>
<protein>
    <recommendedName>
        <fullName evidence="1">Large ribosomal subunit protein uL4</fullName>
    </recommendedName>
    <alternativeName>
        <fullName evidence="3">50S ribosomal protein L4</fullName>
    </alternativeName>
</protein>
<dbReference type="EMBL" id="CP000727">
    <property type="protein sequence ID" value="ABS36193.1"/>
    <property type="molecule type" value="Genomic_DNA"/>
</dbReference>
<dbReference type="EMBL" id="AM412317">
    <property type="protein sequence ID" value="CAL85040.1"/>
    <property type="molecule type" value="Genomic_DNA"/>
</dbReference>
<dbReference type="RefSeq" id="WP_003357518.1">
    <property type="nucleotide sequence ID" value="NC_009698.1"/>
</dbReference>
<dbReference type="RefSeq" id="YP_001255961.1">
    <property type="nucleotide sequence ID" value="NC_009495.1"/>
</dbReference>
<dbReference type="RefSeq" id="YP_001389202.1">
    <property type="nucleotide sequence ID" value="NC_009698.1"/>
</dbReference>
<dbReference type="SMR" id="A5I7K5"/>
<dbReference type="GeneID" id="5187777"/>
<dbReference type="KEGG" id="cbh:CLC_3424"/>
<dbReference type="KEGG" id="cbo:CBO3479"/>
<dbReference type="PATRIC" id="fig|413999.7.peg.3456"/>
<dbReference type="HOGENOM" id="CLU_041575_5_2_9"/>
<dbReference type="PRO" id="PR:A5I7K5"/>
<dbReference type="Proteomes" id="UP000001986">
    <property type="component" value="Chromosome"/>
</dbReference>
<dbReference type="GO" id="GO:1990904">
    <property type="term" value="C:ribonucleoprotein complex"/>
    <property type="evidence" value="ECO:0007669"/>
    <property type="project" value="UniProtKB-KW"/>
</dbReference>
<dbReference type="GO" id="GO:0005840">
    <property type="term" value="C:ribosome"/>
    <property type="evidence" value="ECO:0007669"/>
    <property type="project" value="UniProtKB-KW"/>
</dbReference>
<dbReference type="GO" id="GO:0019843">
    <property type="term" value="F:rRNA binding"/>
    <property type="evidence" value="ECO:0007669"/>
    <property type="project" value="UniProtKB-UniRule"/>
</dbReference>
<dbReference type="GO" id="GO:0003735">
    <property type="term" value="F:structural constituent of ribosome"/>
    <property type="evidence" value="ECO:0000318"/>
    <property type="project" value="GO_Central"/>
</dbReference>
<dbReference type="GO" id="GO:0006412">
    <property type="term" value="P:translation"/>
    <property type="evidence" value="ECO:0007669"/>
    <property type="project" value="UniProtKB-UniRule"/>
</dbReference>
<dbReference type="FunFam" id="3.40.1370.10:FF:000003">
    <property type="entry name" value="50S ribosomal protein L4"/>
    <property type="match status" value="1"/>
</dbReference>
<dbReference type="Gene3D" id="3.40.1370.10">
    <property type="match status" value="1"/>
</dbReference>
<dbReference type="HAMAP" id="MF_01328_B">
    <property type="entry name" value="Ribosomal_uL4_B"/>
    <property type="match status" value="1"/>
</dbReference>
<dbReference type="InterPro" id="IPR002136">
    <property type="entry name" value="Ribosomal_uL4"/>
</dbReference>
<dbReference type="InterPro" id="IPR013005">
    <property type="entry name" value="Ribosomal_uL4-like"/>
</dbReference>
<dbReference type="InterPro" id="IPR023574">
    <property type="entry name" value="Ribosomal_uL4_dom_sf"/>
</dbReference>
<dbReference type="NCBIfam" id="TIGR03953">
    <property type="entry name" value="rplD_bact"/>
    <property type="match status" value="1"/>
</dbReference>
<dbReference type="PANTHER" id="PTHR10746">
    <property type="entry name" value="50S RIBOSOMAL PROTEIN L4"/>
    <property type="match status" value="1"/>
</dbReference>
<dbReference type="PANTHER" id="PTHR10746:SF6">
    <property type="entry name" value="LARGE RIBOSOMAL SUBUNIT PROTEIN UL4M"/>
    <property type="match status" value="1"/>
</dbReference>
<dbReference type="Pfam" id="PF00573">
    <property type="entry name" value="Ribosomal_L4"/>
    <property type="match status" value="1"/>
</dbReference>
<dbReference type="SUPFAM" id="SSF52166">
    <property type="entry name" value="Ribosomal protein L4"/>
    <property type="match status" value="1"/>
</dbReference>
<gene>
    <name evidence="1" type="primary">rplD</name>
    <name type="ordered locus">CBO3479</name>
    <name type="ordered locus">CLC_3424</name>
</gene>
<name>RL4_CLOBH</name>
<organism>
    <name type="scientific">Clostridium botulinum (strain Hall / ATCC 3502 / NCTC 13319 / Type A)</name>
    <dbReference type="NCBI Taxonomy" id="441771"/>
    <lineage>
        <taxon>Bacteria</taxon>
        <taxon>Bacillati</taxon>
        <taxon>Bacillota</taxon>
        <taxon>Clostridia</taxon>
        <taxon>Eubacteriales</taxon>
        <taxon>Clostridiaceae</taxon>
        <taxon>Clostridium</taxon>
    </lineage>
</organism>
<accession>A5I7K5</accession>
<accession>A7G8T7</accession>
<evidence type="ECO:0000255" key="1">
    <source>
        <dbReference type="HAMAP-Rule" id="MF_01328"/>
    </source>
</evidence>
<evidence type="ECO:0000256" key="2">
    <source>
        <dbReference type="SAM" id="MobiDB-lite"/>
    </source>
</evidence>
<evidence type="ECO:0000305" key="3"/>
<reference key="1">
    <citation type="journal article" date="2007" name="Genome Res.">
        <title>Genome sequence of a proteolytic (Group I) Clostridium botulinum strain Hall A and comparative analysis of the clostridial genomes.</title>
        <authorList>
            <person name="Sebaihia M."/>
            <person name="Peck M.W."/>
            <person name="Minton N.P."/>
            <person name="Thomson N.R."/>
            <person name="Holden M.T.G."/>
            <person name="Mitchell W.J."/>
            <person name="Carter A.T."/>
            <person name="Bentley S.D."/>
            <person name="Mason D.R."/>
            <person name="Crossman L."/>
            <person name="Paul C.J."/>
            <person name="Ivens A."/>
            <person name="Wells-Bennik M.H.J."/>
            <person name="Davis I.J."/>
            <person name="Cerdeno-Tarraga A.M."/>
            <person name="Churcher C."/>
            <person name="Quail M.A."/>
            <person name="Chillingworth T."/>
            <person name="Feltwell T."/>
            <person name="Fraser A."/>
            <person name="Goodhead I."/>
            <person name="Hance Z."/>
            <person name="Jagels K."/>
            <person name="Larke N."/>
            <person name="Maddison M."/>
            <person name="Moule S."/>
            <person name="Mungall K."/>
            <person name="Norbertczak H."/>
            <person name="Rabbinowitsch E."/>
            <person name="Sanders M."/>
            <person name="Simmonds M."/>
            <person name="White B."/>
            <person name="Whithead S."/>
            <person name="Parkhill J."/>
        </authorList>
    </citation>
    <scope>NUCLEOTIDE SEQUENCE [LARGE SCALE GENOMIC DNA]</scope>
    <source>
        <strain>Hall / ATCC 3502 / NCTC 13319 / Type A</strain>
    </source>
</reference>
<reference key="2">
    <citation type="journal article" date="2007" name="PLoS ONE">
        <title>Analysis of the neurotoxin complex genes in Clostridium botulinum A1-A4 and B1 strains: BoNT/A3, /Ba4 and /B1 clusters are located within plasmids.</title>
        <authorList>
            <person name="Smith T.J."/>
            <person name="Hill K.K."/>
            <person name="Foley B.T."/>
            <person name="Detter J.C."/>
            <person name="Munk A.C."/>
            <person name="Bruce D.C."/>
            <person name="Doggett N.A."/>
            <person name="Smith L.A."/>
            <person name="Marks J.D."/>
            <person name="Xie G."/>
            <person name="Brettin T.S."/>
        </authorList>
    </citation>
    <scope>NUCLEOTIDE SEQUENCE [LARGE SCALE GENOMIC DNA]</scope>
    <source>
        <strain>Hall / ATCC 3502 / NCTC 13319 / Type A</strain>
    </source>
</reference>
<sequence length="206" mass="22868">MPKVDLFNQNGEKVGDLQLADSVFGVEVNTYAMHQVVKALLANKRQGTQSAKTRAEVSGGGIKPWRQKGTGRARQGSIRAPQWIHGGVVFAPKPRDYRMSIPKSMKKVAIKSALTSKVNENLMVVVDEIKLETPKTKEVVKMLNSFNAKKTLIITNNAEENVYKSARNIEGVQIIPVNNINVYDVLKYDKVVITKDAVSKIEEVYA</sequence>